<feature type="chain" id="PRO_1000139717" description="Putative N-acetylmannosamine-6-phosphate 2-epimerase">
    <location>
        <begin position="1"/>
        <end position="233"/>
    </location>
</feature>
<sequence length="233" mass="24471">MSNLSNLRHKLQNGLIASCQPVPGSAMDTPEIVAAMACAALAGGAVGLRIEGISNIQAVRRATDAPIIGIIKRDLPDSEVRITPWLEDIDALSAAGADIIAFDVTCRERPVSVADLYQRARATGCLTMADASNIDDGLLAHHLGIDFIGTTLSGYTQAIVPTEPDLALVTQLAQAGCRVIAEGRYHSPALAAAAISAGAYAVTVGSAITRIEHICGWFCDAIKQCETEKLTEY</sequence>
<gene>
    <name evidence="1" type="primary">nanE</name>
    <name type="ordered locus">YPTS_2842</name>
</gene>
<comment type="function">
    <text evidence="1">Converts N-acetylmannosamine-6-phosphate (ManNAc-6-P) to N-acetylglucosamine-6-phosphate (GlcNAc-6-P).</text>
</comment>
<comment type="catalytic activity">
    <reaction evidence="1">
        <text>an N-acyl-D-glucosamine 6-phosphate = an N-acyl-D-mannosamine 6-phosphate</text>
        <dbReference type="Rhea" id="RHEA:23932"/>
        <dbReference type="ChEBI" id="CHEBI:57599"/>
        <dbReference type="ChEBI" id="CHEBI:57666"/>
        <dbReference type="EC" id="5.1.3.9"/>
    </reaction>
</comment>
<comment type="pathway">
    <text evidence="1">Amino-sugar metabolism; N-acetylneuraminate degradation; D-fructose 6-phosphate from N-acetylneuraminate: step 3/5.</text>
</comment>
<comment type="similarity">
    <text evidence="1">Belongs to the NanE family.</text>
</comment>
<evidence type="ECO:0000255" key="1">
    <source>
        <dbReference type="HAMAP-Rule" id="MF_01235"/>
    </source>
</evidence>
<protein>
    <recommendedName>
        <fullName evidence="1">Putative N-acetylmannosamine-6-phosphate 2-epimerase</fullName>
        <ecNumber evidence="1">5.1.3.9</ecNumber>
    </recommendedName>
    <alternativeName>
        <fullName evidence="1">ManNAc-6-P epimerase</fullName>
    </alternativeName>
</protein>
<dbReference type="EC" id="5.1.3.9" evidence="1"/>
<dbReference type="EMBL" id="CP001048">
    <property type="protein sequence ID" value="ACC89799.1"/>
    <property type="molecule type" value="Genomic_DNA"/>
</dbReference>
<dbReference type="SMR" id="B2K948"/>
<dbReference type="KEGG" id="ypb:YPTS_2842"/>
<dbReference type="PATRIC" id="fig|502801.10.peg.2268"/>
<dbReference type="UniPathway" id="UPA00629">
    <property type="reaction ID" value="UER00682"/>
</dbReference>
<dbReference type="GO" id="GO:0005829">
    <property type="term" value="C:cytosol"/>
    <property type="evidence" value="ECO:0007669"/>
    <property type="project" value="TreeGrafter"/>
</dbReference>
<dbReference type="GO" id="GO:0047465">
    <property type="term" value="F:N-acylglucosamine-6-phosphate 2-epimerase activity"/>
    <property type="evidence" value="ECO:0007669"/>
    <property type="project" value="UniProtKB-EC"/>
</dbReference>
<dbReference type="GO" id="GO:0005975">
    <property type="term" value="P:carbohydrate metabolic process"/>
    <property type="evidence" value="ECO:0007669"/>
    <property type="project" value="UniProtKB-UniRule"/>
</dbReference>
<dbReference type="GO" id="GO:0006053">
    <property type="term" value="P:N-acetylmannosamine catabolic process"/>
    <property type="evidence" value="ECO:0007669"/>
    <property type="project" value="TreeGrafter"/>
</dbReference>
<dbReference type="GO" id="GO:0019262">
    <property type="term" value="P:N-acetylneuraminate catabolic process"/>
    <property type="evidence" value="ECO:0007669"/>
    <property type="project" value="UniProtKB-UniRule"/>
</dbReference>
<dbReference type="CDD" id="cd04729">
    <property type="entry name" value="NanE"/>
    <property type="match status" value="1"/>
</dbReference>
<dbReference type="FunFam" id="3.20.20.70:FF:000035">
    <property type="entry name" value="Putative N-acetylmannosamine-6-phosphate 2-epimerase"/>
    <property type="match status" value="1"/>
</dbReference>
<dbReference type="Gene3D" id="3.20.20.70">
    <property type="entry name" value="Aldolase class I"/>
    <property type="match status" value="1"/>
</dbReference>
<dbReference type="HAMAP" id="MF_01235">
    <property type="entry name" value="ManNAc6P_epimer"/>
    <property type="match status" value="1"/>
</dbReference>
<dbReference type="InterPro" id="IPR013785">
    <property type="entry name" value="Aldolase_TIM"/>
</dbReference>
<dbReference type="InterPro" id="IPR007260">
    <property type="entry name" value="NanE"/>
</dbReference>
<dbReference type="InterPro" id="IPR011060">
    <property type="entry name" value="RibuloseP-bd_barrel"/>
</dbReference>
<dbReference type="NCBIfam" id="NF002231">
    <property type="entry name" value="PRK01130.1"/>
    <property type="match status" value="1"/>
</dbReference>
<dbReference type="PANTHER" id="PTHR36204">
    <property type="entry name" value="N-ACETYLMANNOSAMINE-6-PHOSPHATE 2-EPIMERASE-RELATED"/>
    <property type="match status" value="1"/>
</dbReference>
<dbReference type="PANTHER" id="PTHR36204:SF1">
    <property type="entry name" value="N-ACETYLMANNOSAMINE-6-PHOSPHATE 2-EPIMERASE-RELATED"/>
    <property type="match status" value="1"/>
</dbReference>
<dbReference type="Pfam" id="PF04131">
    <property type="entry name" value="NanE"/>
    <property type="match status" value="1"/>
</dbReference>
<dbReference type="SUPFAM" id="SSF51366">
    <property type="entry name" value="Ribulose-phoshate binding barrel"/>
    <property type="match status" value="1"/>
</dbReference>
<organism>
    <name type="scientific">Yersinia pseudotuberculosis serotype IB (strain PB1/+)</name>
    <dbReference type="NCBI Taxonomy" id="502801"/>
    <lineage>
        <taxon>Bacteria</taxon>
        <taxon>Pseudomonadati</taxon>
        <taxon>Pseudomonadota</taxon>
        <taxon>Gammaproteobacteria</taxon>
        <taxon>Enterobacterales</taxon>
        <taxon>Yersiniaceae</taxon>
        <taxon>Yersinia</taxon>
    </lineage>
</organism>
<keyword id="KW-0119">Carbohydrate metabolism</keyword>
<keyword id="KW-0413">Isomerase</keyword>
<proteinExistence type="inferred from homology"/>
<reference key="1">
    <citation type="submission" date="2008-04" db="EMBL/GenBank/DDBJ databases">
        <title>Complete sequence of Yersinia pseudotuberculosis PB1/+.</title>
        <authorList>
            <person name="Copeland A."/>
            <person name="Lucas S."/>
            <person name="Lapidus A."/>
            <person name="Glavina del Rio T."/>
            <person name="Dalin E."/>
            <person name="Tice H."/>
            <person name="Bruce D."/>
            <person name="Goodwin L."/>
            <person name="Pitluck S."/>
            <person name="Munk A.C."/>
            <person name="Brettin T."/>
            <person name="Detter J.C."/>
            <person name="Han C."/>
            <person name="Tapia R."/>
            <person name="Schmutz J."/>
            <person name="Larimer F."/>
            <person name="Land M."/>
            <person name="Hauser L."/>
            <person name="Challacombe J.F."/>
            <person name="Green L."/>
            <person name="Lindler L.E."/>
            <person name="Nikolich M.P."/>
            <person name="Richardson P."/>
        </authorList>
    </citation>
    <scope>NUCLEOTIDE SEQUENCE [LARGE SCALE GENOMIC DNA]</scope>
    <source>
        <strain>PB1/+</strain>
    </source>
</reference>
<accession>B2K948</accession>
<name>NANE_YERPB</name>